<name>RHAA_ECO45</name>
<feature type="chain" id="PRO_1000128876" description="L-rhamnose isomerase">
    <location>
        <begin position="1"/>
        <end position="419"/>
    </location>
</feature>
<feature type="binding site" evidence="1">
    <location>
        <position position="262"/>
    </location>
    <ligand>
        <name>Mn(2+)</name>
        <dbReference type="ChEBI" id="CHEBI:29035"/>
    </ligand>
</feature>
<feature type="binding site" evidence="1">
    <location>
        <position position="294"/>
    </location>
    <ligand>
        <name>Mn(2+)</name>
        <dbReference type="ChEBI" id="CHEBI:29035"/>
    </ligand>
</feature>
<feature type="binding site" evidence="1">
    <location>
        <position position="296"/>
    </location>
    <ligand>
        <name>Mn(2+)</name>
        <dbReference type="ChEBI" id="CHEBI:29035"/>
    </ligand>
</feature>
<comment type="function">
    <text evidence="1">Catalyzes the interconversion of L-rhamnose and L-rhamnulose.</text>
</comment>
<comment type="catalytic activity">
    <reaction evidence="1">
        <text>L-rhamnopyranose = L-rhamnulose</text>
        <dbReference type="Rhea" id="RHEA:23160"/>
        <dbReference type="ChEBI" id="CHEBI:17897"/>
        <dbReference type="ChEBI" id="CHEBI:62346"/>
        <dbReference type="EC" id="5.3.1.14"/>
    </reaction>
</comment>
<comment type="cofactor">
    <cofactor evidence="1">
        <name>Mn(2+)</name>
        <dbReference type="ChEBI" id="CHEBI:29035"/>
    </cofactor>
    <text evidence="1">Binds 1 Mn(2+) ion per subunit.</text>
</comment>
<comment type="pathway">
    <text evidence="1">Carbohydrate degradation; L-rhamnose degradation; glycerone phosphate from L-rhamnose: step 1/3.</text>
</comment>
<comment type="subunit">
    <text evidence="1">Homotetramer.</text>
</comment>
<comment type="subcellular location">
    <subcellularLocation>
        <location evidence="1">Cytoplasm</location>
    </subcellularLocation>
</comment>
<comment type="similarity">
    <text evidence="1">Belongs to the rhamnose isomerase family.</text>
</comment>
<sequence>MTTQLEQAWELAKQRFAAVGIDVEEALRQLDRLPVSMHCWQGDDVSGFENPEGSLTGGIQATGNYPGKARNASELRADLEQAMRLIPGPKRLNLHAIYLESDTPVSRDQIKPEHFKNWVEWAKANQLGLDFNPSCFSHPLSADGFTLSHADDRIRQFWIDHCKASRRVSAYFGEQLGTPSVMNIWIPDGMKDITVDRLAPRQRLLAALDEVISEKLNPAHHIDAVESKLFGIGAESYTVGSNEFYLGYATSRQTALCLDAGHFHPTEVISDKISAAMLYVPQLLLHVSRPVRWDSDHVVLLDDETQAIASEIVRHDLFDRVHIGLDFFDASINRIAAWVIGTRNMKKALLRALLEPTAELRKLEAAGDYTARLALLEEQKSLPWQAVWEMYCQRHDTPAGSEWLENVRTYEKEILSRRG</sequence>
<gene>
    <name evidence="1" type="primary">rhaA</name>
    <name type="ordered locus">ECS88_4350</name>
</gene>
<evidence type="ECO:0000255" key="1">
    <source>
        <dbReference type="HAMAP-Rule" id="MF_00541"/>
    </source>
</evidence>
<accession>B7MI35</accession>
<reference key="1">
    <citation type="journal article" date="2009" name="PLoS Genet.">
        <title>Organised genome dynamics in the Escherichia coli species results in highly diverse adaptive paths.</title>
        <authorList>
            <person name="Touchon M."/>
            <person name="Hoede C."/>
            <person name="Tenaillon O."/>
            <person name="Barbe V."/>
            <person name="Baeriswyl S."/>
            <person name="Bidet P."/>
            <person name="Bingen E."/>
            <person name="Bonacorsi S."/>
            <person name="Bouchier C."/>
            <person name="Bouvet O."/>
            <person name="Calteau A."/>
            <person name="Chiapello H."/>
            <person name="Clermont O."/>
            <person name="Cruveiller S."/>
            <person name="Danchin A."/>
            <person name="Diard M."/>
            <person name="Dossat C."/>
            <person name="Karoui M.E."/>
            <person name="Frapy E."/>
            <person name="Garry L."/>
            <person name="Ghigo J.M."/>
            <person name="Gilles A.M."/>
            <person name="Johnson J."/>
            <person name="Le Bouguenec C."/>
            <person name="Lescat M."/>
            <person name="Mangenot S."/>
            <person name="Martinez-Jehanne V."/>
            <person name="Matic I."/>
            <person name="Nassif X."/>
            <person name="Oztas S."/>
            <person name="Petit M.A."/>
            <person name="Pichon C."/>
            <person name="Rouy Z."/>
            <person name="Ruf C.S."/>
            <person name="Schneider D."/>
            <person name="Tourret J."/>
            <person name="Vacherie B."/>
            <person name="Vallenet D."/>
            <person name="Medigue C."/>
            <person name="Rocha E.P.C."/>
            <person name="Denamur E."/>
        </authorList>
    </citation>
    <scope>NUCLEOTIDE SEQUENCE [LARGE SCALE GENOMIC DNA]</scope>
    <source>
        <strain>S88 / ExPEC</strain>
    </source>
</reference>
<proteinExistence type="inferred from homology"/>
<protein>
    <recommendedName>
        <fullName evidence="1">L-rhamnose isomerase</fullName>
        <ecNumber evidence="1">5.3.1.14</ecNumber>
    </recommendedName>
</protein>
<organism>
    <name type="scientific">Escherichia coli O45:K1 (strain S88 / ExPEC)</name>
    <dbReference type="NCBI Taxonomy" id="585035"/>
    <lineage>
        <taxon>Bacteria</taxon>
        <taxon>Pseudomonadati</taxon>
        <taxon>Pseudomonadota</taxon>
        <taxon>Gammaproteobacteria</taxon>
        <taxon>Enterobacterales</taxon>
        <taxon>Enterobacteriaceae</taxon>
        <taxon>Escherichia</taxon>
    </lineage>
</organism>
<dbReference type="EC" id="5.3.1.14" evidence="1"/>
<dbReference type="EMBL" id="CU928161">
    <property type="protein sequence ID" value="CAR05533.1"/>
    <property type="molecule type" value="Genomic_DNA"/>
</dbReference>
<dbReference type="RefSeq" id="WP_001298699.1">
    <property type="nucleotide sequence ID" value="NC_011742.1"/>
</dbReference>
<dbReference type="SMR" id="B7MI35"/>
<dbReference type="KEGG" id="ecz:ECS88_4350"/>
<dbReference type="HOGENOM" id="CLU_052790_0_0_6"/>
<dbReference type="UniPathway" id="UPA00541">
    <property type="reaction ID" value="UER00601"/>
</dbReference>
<dbReference type="Proteomes" id="UP000000747">
    <property type="component" value="Chromosome"/>
</dbReference>
<dbReference type="GO" id="GO:0005737">
    <property type="term" value="C:cytoplasm"/>
    <property type="evidence" value="ECO:0007669"/>
    <property type="project" value="UniProtKB-SubCell"/>
</dbReference>
<dbReference type="GO" id="GO:0008740">
    <property type="term" value="F:L-rhamnose isomerase activity"/>
    <property type="evidence" value="ECO:0007669"/>
    <property type="project" value="UniProtKB-UniRule"/>
</dbReference>
<dbReference type="GO" id="GO:0030145">
    <property type="term" value="F:manganese ion binding"/>
    <property type="evidence" value="ECO:0007669"/>
    <property type="project" value="UniProtKB-UniRule"/>
</dbReference>
<dbReference type="GO" id="GO:0019324">
    <property type="term" value="P:L-lyxose metabolic process"/>
    <property type="evidence" value="ECO:0007669"/>
    <property type="project" value="TreeGrafter"/>
</dbReference>
<dbReference type="GO" id="GO:0019301">
    <property type="term" value="P:rhamnose catabolic process"/>
    <property type="evidence" value="ECO:0007669"/>
    <property type="project" value="UniProtKB-UniRule"/>
</dbReference>
<dbReference type="FunFam" id="3.20.20.150:FF:000006">
    <property type="entry name" value="L-rhamnose isomerase"/>
    <property type="match status" value="1"/>
</dbReference>
<dbReference type="Gene3D" id="3.20.20.150">
    <property type="entry name" value="Divalent-metal-dependent TIM barrel enzymes"/>
    <property type="match status" value="1"/>
</dbReference>
<dbReference type="HAMAP" id="MF_00541">
    <property type="entry name" value="RhaA"/>
    <property type="match status" value="1"/>
</dbReference>
<dbReference type="InterPro" id="IPR050337">
    <property type="entry name" value="L-rhamnose_isomerase"/>
</dbReference>
<dbReference type="InterPro" id="IPR009308">
    <property type="entry name" value="Rhamnose_isomerase"/>
</dbReference>
<dbReference type="InterPro" id="IPR036237">
    <property type="entry name" value="Xyl_isomerase-like_sf"/>
</dbReference>
<dbReference type="NCBIfam" id="NF002203">
    <property type="entry name" value="PRK01076.1"/>
    <property type="match status" value="1"/>
</dbReference>
<dbReference type="NCBIfam" id="TIGR01748">
    <property type="entry name" value="rhaA"/>
    <property type="match status" value="1"/>
</dbReference>
<dbReference type="PANTHER" id="PTHR30268">
    <property type="entry name" value="L-RHAMNOSE ISOMERASE"/>
    <property type="match status" value="1"/>
</dbReference>
<dbReference type="PANTHER" id="PTHR30268:SF0">
    <property type="entry name" value="L-RHAMNOSE ISOMERASE"/>
    <property type="match status" value="1"/>
</dbReference>
<dbReference type="Pfam" id="PF06134">
    <property type="entry name" value="RhaA"/>
    <property type="match status" value="1"/>
</dbReference>
<dbReference type="SUPFAM" id="SSF51658">
    <property type="entry name" value="Xylose isomerase-like"/>
    <property type="match status" value="1"/>
</dbReference>
<keyword id="KW-0963">Cytoplasm</keyword>
<keyword id="KW-0413">Isomerase</keyword>
<keyword id="KW-0464">Manganese</keyword>
<keyword id="KW-0479">Metal-binding</keyword>
<keyword id="KW-1185">Reference proteome</keyword>
<keyword id="KW-0684">Rhamnose metabolism</keyword>